<proteinExistence type="inferred from homology"/>
<reference key="1">
    <citation type="journal article" date="2000" name="Science">
        <title>Complete genome sequence of Neisseria meningitidis serogroup B strain MC58.</title>
        <authorList>
            <person name="Tettelin H."/>
            <person name="Saunders N.J."/>
            <person name="Heidelberg J.F."/>
            <person name="Jeffries A.C."/>
            <person name="Nelson K.E."/>
            <person name="Eisen J.A."/>
            <person name="Ketchum K.A."/>
            <person name="Hood D.W."/>
            <person name="Peden J.F."/>
            <person name="Dodson R.J."/>
            <person name="Nelson W.C."/>
            <person name="Gwinn M.L."/>
            <person name="DeBoy R.T."/>
            <person name="Peterson J.D."/>
            <person name="Hickey E.K."/>
            <person name="Haft D.H."/>
            <person name="Salzberg S.L."/>
            <person name="White O."/>
            <person name="Fleischmann R.D."/>
            <person name="Dougherty B.A."/>
            <person name="Mason T.M."/>
            <person name="Ciecko A."/>
            <person name="Parksey D.S."/>
            <person name="Blair E."/>
            <person name="Cittone H."/>
            <person name="Clark E.B."/>
            <person name="Cotton M.D."/>
            <person name="Utterback T.R."/>
            <person name="Khouri H.M."/>
            <person name="Qin H."/>
            <person name="Vamathevan J.J."/>
            <person name="Gill J."/>
            <person name="Scarlato V."/>
            <person name="Masignani V."/>
            <person name="Pizza M."/>
            <person name="Grandi G."/>
            <person name="Sun L."/>
            <person name="Smith H.O."/>
            <person name="Fraser C.M."/>
            <person name="Moxon E.R."/>
            <person name="Rappuoli R."/>
            <person name="Venter J.C."/>
        </authorList>
    </citation>
    <scope>NUCLEOTIDE SEQUENCE [LARGE SCALE GENOMIC DNA]</scope>
    <source>
        <strain>ATCC BAA-335 / MC58</strain>
    </source>
</reference>
<keyword id="KW-0414">Isoprene biosynthesis</keyword>
<keyword id="KW-0456">Lyase</keyword>
<keyword id="KW-0479">Metal-binding</keyword>
<keyword id="KW-1185">Reference proteome</keyword>
<sequence length="160" mass="17020">MTNIRIGQGYDVHQLTEGRKLILGGVEIPFEKGLLGHSDADALLHAVTDALLGAAGLGDIGSHFPDTAAEFKDADSRVLLRAAYQSVQAQGWQAVNVDTTVIAQKPKLAPHIPQMRANIAADLGIDISCVNIKGKTNEKLGYLGRMEGIEAQAAVLLVRI</sequence>
<evidence type="ECO:0000255" key="1">
    <source>
        <dbReference type="HAMAP-Rule" id="MF_00107"/>
    </source>
</evidence>
<gene>
    <name evidence="1" type="primary">ispF</name>
    <name type="ordered locus">NMB1512</name>
</gene>
<protein>
    <recommendedName>
        <fullName evidence="1">2-C-methyl-D-erythritol 2,4-cyclodiphosphate synthase</fullName>
        <shortName evidence="1">MECDP-synthase</shortName>
        <shortName evidence="1">MECPP-synthase</shortName>
        <shortName evidence="1">MECPS</shortName>
        <ecNumber evidence="1">4.6.1.12</ecNumber>
    </recommendedName>
</protein>
<dbReference type="EC" id="4.6.1.12" evidence="1"/>
<dbReference type="EMBL" id="AE002098">
    <property type="protein sequence ID" value="AAF41868.1"/>
    <property type="molecule type" value="Genomic_DNA"/>
</dbReference>
<dbReference type="PIR" id="G81073">
    <property type="entry name" value="G81073"/>
</dbReference>
<dbReference type="RefSeq" id="NP_274520.1">
    <property type="nucleotide sequence ID" value="NC_003112.2"/>
</dbReference>
<dbReference type="RefSeq" id="WP_002218386.1">
    <property type="nucleotide sequence ID" value="NC_003112.2"/>
</dbReference>
<dbReference type="SMR" id="Q9JYM5"/>
<dbReference type="FunCoup" id="Q9JYM5">
    <property type="interactions" value="358"/>
</dbReference>
<dbReference type="STRING" id="122586.NMB1512"/>
<dbReference type="PaxDb" id="122586-NMB1512"/>
<dbReference type="GeneID" id="86876398"/>
<dbReference type="KEGG" id="nme:NMB1512"/>
<dbReference type="PATRIC" id="fig|122586.8.peg.1916"/>
<dbReference type="HOGENOM" id="CLU_084630_2_0_4"/>
<dbReference type="InParanoid" id="Q9JYM5"/>
<dbReference type="OrthoDB" id="9804336at2"/>
<dbReference type="UniPathway" id="UPA00056">
    <property type="reaction ID" value="UER00095"/>
</dbReference>
<dbReference type="Proteomes" id="UP000000425">
    <property type="component" value="Chromosome"/>
</dbReference>
<dbReference type="GO" id="GO:0008685">
    <property type="term" value="F:2-C-methyl-D-erythritol 2,4-cyclodiphosphate synthase activity"/>
    <property type="evidence" value="ECO:0000318"/>
    <property type="project" value="GO_Central"/>
</dbReference>
<dbReference type="GO" id="GO:0046872">
    <property type="term" value="F:metal ion binding"/>
    <property type="evidence" value="ECO:0007669"/>
    <property type="project" value="UniProtKB-KW"/>
</dbReference>
<dbReference type="GO" id="GO:0019288">
    <property type="term" value="P:isopentenyl diphosphate biosynthetic process, methylerythritol 4-phosphate pathway"/>
    <property type="evidence" value="ECO:0007669"/>
    <property type="project" value="UniProtKB-UniRule"/>
</dbReference>
<dbReference type="GO" id="GO:0016114">
    <property type="term" value="P:terpenoid biosynthetic process"/>
    <property type="evidence" value="ECO:0007669"/>
    <property type="project" value="InterPro"/>
</dbReference>
<dbReference type="CDD" id="cd00554">
    <property type="entry name" value="MECDP_synthase"/>
    <property type="match status" value="1"/>
</dbReference>
<dbReference type="FunFam" id="3.30.1330.50:FF:000001">
    <property type="entry name" value="2-C-methyl-D-erythritol 2,4-cyclodiphosphate synthase"/>
    <property type="match status" value="1"/>
</dbReference>
<dbReference type="Gene3D" id="3.30.1330.50">
    <property type="entry name" value="2-C-methyl-D-erythritol 2,4-cyclodiphosphate synthase"/>
    <property type="match status" value="1"/>
</dbReference>
<dbReference type="HAMAP" id="MF_00107">
    <property type="entry name" value="IspF"/>
    <property type="match status" value="1"/>
</dbReference>
<dbReference type="InterPro" id="IPR003526">
    <property type="entry name" value="MECDP_synthase"/>
</dbReference>
<dbReference type="InterPro" id="IPR020555">
    <property type="entry name" value="MECDP_synthase_CS"/>
</dbReference>
<dbReference type="InterPro" id="IPR036571">
    <property type="entry name" value="MECDP_synthase_sf"/>
</dbReference>
<dbReference type="NCBIfam" id="TIGR00151">
    <property type="entry name" value="ispF"/>
    <property type="match status" value="1"/>
</dbReference>
<dbReference type="PANTHER" id="PTHR43181">
    <property type="entry name" value="2-C-METHYL-D-ERYTHRITOL 2,4-CYCLODIPHOSPHATE SYNTHASE, CHLOROPLASTIC"/>
    <property type="match status" value="1"/>
</dbReference>
<dbReference type="PANTHER" id="PTHR43181:SF1">
    <property type="entry name" value="2-C-METHYL-D-ERYTHRITOL 2,4-CYCLODIPHOSPHATE SYNTHASE, CHLOROPLASTIC"/>
    <property type="match status" value="1"/>
</dbReference>
<dbReference type="Pfam" id="PF02542">
    <property type="entry name" value="YgbB"/>
    <property type="match status" value="1"/>
</dbReference>
<dbReference type="SUPFAM" id="SSF69765">
    <property type="entry name" value="IpsF-like"/>
    <property type="match status" value="1"/>
</dbReference>
<dbReference type="PROSITE" id="PS01350">
    <property type="entry name" value="ISPF"/>
    <property type="match status" value="1"/>
</dbReference>
<feature type="chain" id="PRO_0000189487" description="2-C-methyl-D-erythritol 2,4-cyclodiphosphate synthase">
    <location>
        <begin position="1"/>
        <end position="160"/>
    </location>
</feature>
<feature type="binding site" evidence="1">
    <location>
        <begin position="11"/>
        <end position="13"/>
    </location>
    <ligand>
        <name>4-CDP-2-C-methyl-D-erythritol 2-phosphate</name>
        <dbReference type="ChEBI" id="CHEBI:57919"/>
    </ligand>
</feature>
<feature type="binding site" evidence="1">
    <location>
        <position position="11"/>
    </location>
    <ligand>
        <name>a divalent metal cation</name>
        <dbReference type="ChEBI" id="CHEBI:60240"/>
    </ligand>
</feature>
<feature type="binding site" evidence="1">
    <location>
        <position position="13"/>
    </location>
    <ligand>
        <name>a divalent metal cation</name>
        <dbReference type="ChEBI" id="CHEBI:60240"/>
    </ligand>
</feature>
<feature type="binding site" evidence="1">
    <location>
        <begin position="37"/>
        <end position="38"/>
    </location>
    <ligand>
        <name>4-CDP-2-C-methyl-D-erythritol 2-phosphate</name>
        <dbReference type="ChEBI" id="CHEBI:57919"/>
    </ligand>
</feature>
<feature type="binding site" evidence="1">
    <location>
        <position position="45"/>
    </location>
    <ligand>
        <name>a divalent metal cation</name>
        <dbReference type="ChEBI" id="CHEBI:60240"/>
    </ligand>
</feature>
<feature type="binding site" evidence="1">
    <location>
        <begin position="59"/>
        <end position="61"/>
    </location>
    <ligand>
        <name>4-CDP-2-C-methyl-D-erythritol 2-phosphate</name>
        <dbReference type="ChEBI" id="CHEBI:57919"/>
    </ligand>
</feature>
<feature type="binding site" evidence="1">
    <location>
        <position position="145"/>
    </location>
    <ligand>
        <name>4-CDP-2-C-methyl-D-erythritol 2-phosphate</name>
        <dbReference type="ChEBI" id="CHEBI:57919"/>
    </ligand>
</feature>
<feature type="site" description="Transition state stabilizer" evidence="1">
    <location>
        <position position="37"/>
    </location>
</feature>
<feature type="site" description="Transition state stabilizer" evidence="1">
    <location>
        <position position="136"/>
    </location>
</feature>
<comment type="function">
    <text evidence="1">Involved in the biosynthesis of isopentenyl diphosphate (IPP) and dimethylallyl diphosphate (DMAPP), two major building blocks of isoprenoid compounds. Catalyzes the conversion of 4-diphosphocytidyl-2-C-methyl-D-erythritol 2-phosphate (CDP-ME2P) to 2-C-methyl-D-erythritol 2,4-cyclodiphosphate (ME-CPP) with a corresponding release of cytidine 5-monophosphate (CMP).</text>
</comment>
<comment type="catalytic activity">
    <reaction evidence="1">
        <text>4-CDP-2-C-methyl-D-erythritol 2-phosphate = 2-C-methyl-D-erythritol 2,4-cyclic diphosphate + CMP</text>
        <dbReference type="Rhea" id="RHEA:23864"/>
        <dbReference type="ChEBI" id="CHEBI:57919"/>
        <dbReference type="ChEBI" id="CHEBI:58483"/>
        <dbReference type="ChEBI" id="CHEBI:60377"/>
        <dbReference type="EC" id="4.6.1.12"/>
    </reaction>
</comment>
<comment type="cofactor">
    <cofactor evidence="1">
        <name>a divalent metal cation</name>
        <dbReference type="ChEBI" id="CHEBI:60240"/>
    </cofactor>
    <text evidence="1">Binds 1 divalent metal cation per subunit.</text>
</comment>
<comment type="pathway">
    <text evidence="1">Isoprenoid biosynthesis; isopentenyl diphosphate biosynthesis via DXP pathway; isopentenyl diphosphate from 1-deoxy-D-xylulose 5-phosphate: step 4/6.</text>
</comment>
<comment type="subunit">
    <text evidence="1">Homotrimer.</text>
</comment>
<comment type="similarity">
    <text evidence="1">Belongs to the IspF family.</text>
</comment>
<accession>Q9JYM5</accession>
<organism>
    <name type="scientific">Neisseria meningitidis serogroup B (strain ATCC BAA-335 / MC58)</name>
    <dbReference type="NCBI Taxonomy" id="122586"/>
    <lineage>
        <taxon>Bacteria</taxon>
        <taxon>Pseudomonadati</taxon>
        <taxon>Pseudomonadota</taxon>
        <taxon>Betaproteobacteria</taxon>
        <taxon>Neisseriales</taxon>
        <taxon>Neisseriaceae</taxon>
        <taxon>Neisseria</taxon>
    </lineage>
</organism>
<name>ISPF_NEIMB</name>